<name>CIKA_THEVB</name>
<organism>
    <name type="scientific">Thermosynechococcus vestitus (strain NIES-2133 / IAM M-273 / BP-1)</name>
    <dbReference type="NCBI Taxonomy" id="197221"/>
    <lineage>
        <taxon>Bacteria</taxon>
        <taxon>Bacillati</taxon>
        <taxon>Cyanobacteriota</taxon>
        <taxon>Cyanophyceae</taxon>
        <taxon>Acaryochloridales</taxon>
        <taxon>Thermosynechococcaceae</taxon>
        <taxon>Thermosynechococcus</taxon>
    </lineage>
</organism>
<comment type="function">
    <text evidence="1">Functions in an input pathway to the Kai circadian clock. Senses oxidized quinones via its C-terminal pseudo-receiver domain, providing a link between cell metabolism and the clock. Affects the ratio of phosphorylated to unphosphorylated KaiC, binds quinones via its pseudo-receptor domain. Quinone-binding destabilizes the protein rapidly. Autophosphorylates, does not transfer the phosphate to its pseudo-receiver (PsR) domain. May play a role in cell division.</text>
</comment>
<comment type="function">
    <text evidence="1">Also functions in a two-component CikA/RpaA output pathway from the circadian clock, negatively regulating kaiBC expression independently of labA and of sasA. One of three clock output pathways. Dephosphorylates phospho-RpaA, enhanced by KaiB and KaiC, has only modest kinase activity on RpaA.</text>
</comment>
<comment type="catalytic activity">
    <reaction evidence="1">
        <text>ATP + protein L-histidine = ADP + protein N-phospho-L-histidine.</text>
        <dbReference type="EC" id="2.7.13.3"/>
    </reaction>
</comment>
<comment type="subunit">
    <text evidence="1 3">Homodimer. Part of the circadian clock (KaiA, KaiB, KaiC, CikA, RpaA, SasA), the composition of which varies during the circadian cycle. KaiA and CikA compete for binding to KaiB(fs) (By similarity). The PsR domain binds the KaiB:KaiC CI complex but poorly to either protein alone. KaiA and CikA bind to the same region of the KaiB(fs) form and therefore compete (PubMed:28302851).</text>
</comment>
<comment type="domain">
    <text evidence="1">The N-terminal domain is followed by a GAF (phytochrome-like) domain that lacks the conserved Cys residue for ligand binding, a histidine kinase domain and a C-terminal response regulator domain without the conserved Asp residue that is phosphorylated (pseudo-receiver domain, PsR).</text>
</comment>
<comment type="similarity">
    <text evidence="5">In the N-terminal section; belongs to the phytochrome family.</text>
</comment>
<gene>
    <name evidence="4" type="primary">cikA</name>
    <name evidence="6" type="ordered locus">tll0899</name>
</gene>
<dbReference type="EC" id="2.7.13.3" evidence="1"/>
<dbReference type="EMBL" id="BA000039">
    <property type="protein sequence ID" value="BAC08451.1"/>
    <property type="molecule type" value="Genomic_DNA"/>
</dbReference>
<dbReference type="RefSeq" id="NP_681689.1">
    <property type="nucleotide sequence ID" value="NC_004113.1"/>
</dbReference>
<dbReference type="RefSeq" id="WP_011056743.1">
    <property type="nucleotide sequence ID" value="NC_004113.1"/>
</dbReference>
<dbReference type="PDB" id="5JYU">
    <property type="method" value="NMR"/>
    <property type="chains" value="A=613-729"/>
</dbReference>
<dbReference type="PDB" id="5JYV">
    <property type="method" value="NMR"/>
    <property type="chains" value="A=613-729"/>
</dbReference>
<dbReference type="PDBsum" id="5JYU"/>
<dbReference type="PDBsum" id="5JYV"/>
<dbReference type="BMRB" id="Q8DKG0"/>
<dbReference type="SMR" id="Q8DKG0"/>
<dbReference type="STRING" id="197221.gene:10747491"/>
<dbReference type="EnsemblBacteria" id="BAC08451">
    <property type="protein sequence ID" value="BAC08451"/>
    <property type="gene ID" value="BAC08451"/>
</dbReference>
<dbReference type="KEGG" id="tel:tll0899"/>
<dbReference type="PATRIC" id="fig|197221.4.peg.945"/>
<dbReference type="eggNOG" id="COG0745">
    <property type="taxonomic scope" value="Bacteria"/>
</dbReference>
<dbReference type="eggNOG" id="COG2205">
    <property type="taxonomic scope" value="Bacteria"/>
</dbReference>
<dbReference type="Proteomes" id="UP000000440">
    <property type="component" value="Chromosome"/>
</dbReference>
<dbReference type="GO" id="GO:0005524">
    <property type="term" value="F:ATP binding"/>
    <property type="evidence" value="ECO:0007669"/>
    <property type="project" value="UniProtKB-KW"/>
</dbReference>
<dbReference type="GO" id="GO:0000155">
    <property type="term" value="F:phosphorelay sensor kinase activity"/>
    <property type="evidence" value="ECO:0007669"/>
    <property type="project" value="InterPro"/>
</dbReference>
<dbReference type="GO" id="GO:0051301">
    <property type="term" value="P:cell division"/>
    <property type="evidence" value="ECO:0007669"/>
    <property type="project" value="UniProtKB-KW"/>
</dbReference>
<dbReference type="GO" id="GO:0048511">
    <property type="term" value="P:rhythmic process"/>
    <property type="evidence" value="ECO:0007669"/>
    <property type="project" value="UniProtKB-KW"/>
</dbReference>
<dbReference type="CDD" id="cd16922">
    <property type="entry name" value="HATPase_EvgS-ArcB-TorS-like"/>
    <property type="match status" value="1"/>
</dbReference>
<dbReference type="CDD" id="cd00082">
    <property type="entry name" value="HisKA"/>
    <property type="match status" value="1"/>
</dbReference>
<dbReference type="FunFam" id="3.30.565.10:FF:000010">
    <property type="entry name" value="Sensor histidine kinase RcsC"/>
    <property type="match status" value="1"/>
</dbReference>
<dbReference type="Gene3D" id="1.10.287.130">
    <property type="match status" value="1"/>
</dbReference>
<dbReference type="Gene3D" id="3.30.450.40">
    <property type="match status" value="1"/>
</dbReference>
<dbReference type="Gene3D" id="3.30.565.10">
    <property type="entry name" value="Histidine kinase-like ATPase, C-terminal domain"/>
    <property type="match status" value="1"/>
</dbReference>
<dbReference type="InterPro" id="IPR011006">
    <property type="entry name" value="CheY-like_superfamily"/>
</dbReference>
<dbReference type="InterPro" id="IPR003018">
    <property type="entry name" value="GAF"/>
</dbReference>
<dbReference type="InterPro" id="IPR029016">
    <property type="entry name" value="GAF-like_dom_sf"/>
</dbReference>
<dbReference type="InterPro" id="IPR036890">
    <property type="entry name" value="HATPase_C_sf"/>
</dbReference>
<dbReference type="InterPro" id="IPR005467">
    <property type="entry name" value="His_kinase_dom"/>
</dbReference>
<dbReference type="InterPro" id="IPR003661">
    <property type="entry name" value="HisK_dim/P_dom"/>
</dbReference>
<dbReference type="InterPro" id="IPR036097">
    <property type="entry name" value="HisK_dim/P_sf"/>
</dbReference>
<dbReference type="InterPro" id="IPR016132">
    <property type="entry name" value="Phyto_chromo_attachment"/>
</dbReference>
<dbReference type="InterPro" id="IPR050736">
    <property type="entry name" value="Sensor_HK_Regulatory"/>
</dbReference>
<dbReference type="InterPro" id="IPR004358">
    <property type="entry name" value="Sig_transdc_His_kin-like_C"/>
</dbReference>
<dbReference type="PANTHER" id="PTHR43711:SF26">
    <property type="entry name" value="SENSOR HISTIDINE KINASE RCSC"/>
    <property type="match status" value="1"/>
</dbReference>
<dbReference type="PANTHER" id="PTHR43711">
    <property type="entry name" value="TWO-COMPONENT HISTIDINE KINASE"/>
    <property type="match status" value="1"/>
</dbReference>
<dbReference type="Pfam" id="PF01590">
    <property type="entry name" value="GAF"/>
    <property type="match status" value="1"/>
</dbReference>
<dbReference type="Pfam" id="PF02518">
    <property type="entry name" value="HATPase_c"/>
    <property type="match status" value="1"/>
</dbReference>
<dbReference type="Pfam" id="PF00512">
    <property type="entry name" value="HisKA"/>
    <property type="match status" value="1"/>
</dbReference>
<dbReference type="PRINTS" id="PR00344">
    <property type="entry name" value="BCTRLSENSOR"/>
</dbReference>
<dbReference type="SMART" id="SM00065">
    <property type="entry name" value="GAF"/>
    <property type="match status" value="1"/>
</dbReference>
<dbReference type="SMART" id="SM00387">
    <property type="entry name" value="HATPase_c"/>
    <property type="match status" value="1"/>
</dbReference>
<dbReference type="SMART" id="SM00388">
    <property type="entry name" value="HisKA"/>
    <property type="match status" value="1"/>
</dbReference>
<dbReference type="SUPFAM" id="SSF55874">
    <property type="entry name" value="ATPase domain of HSP90 chaperone/DNA topoisomerase II/histidine kinase"/>
    <property type="match status" value="1"/>
</dbReference>
<dbReference type="SUPFAM" id="SSF52172">
    <property type="entry name" value="CheY-like"/>
    <property type="match status" value="1"/>
</dbReference>
<dbReference type="SUPFAM" id="SSF55781">
    <property type="entry name" value="GAF domain-like"/>
    <property type="match status" value="1"/>
</dbReference>
<dbReference type="SUPFAM" id="SSF47384">
    <property type="entry name" value="Homodimeric domain of signal transducing histidine kinase"/>
    <property type="match status" value="1"/>
</dbReference>
<dbReference type="PROSITE" id="PS50109">
    <property type="entry name" value="HIS_KIN"/>
    <property type="match status" value="1"/>
</dbReference>
<dbReference type="PROSITE" id="PS50046">
    <property type="entry name" value="PHYTOCHROME_2"/>
    <property type="match status" value="1"/>
</dbReference>
<keyword id="KW-0002">3D-structure</keyword>
<keyword id="KW-0067">ATP-binding</keyword>
<keyword id="KW-0090">Biological rhythms</keyword>
<keyword id="KW-0131">Cell cycle</keyword>
<keyword id="KW-0132">Cell division</keyword>
<keyword id="KW-0418">Kinase</keyword>
<keyword id="KW-0547">Nucleotide-binding</keyword>
<keyword id="KW-0597">Phosphoprotein</keyword>
<keyword id="KW-1185">Reference proteome</keyword>
<keyword id="KW-0808">Transferase</keyword>
<keyword id="KW-0902">Two-component regulatory system</keyword>
<accession>Q8DKG0</accession>
<feature type="chain" id="PRO_0000457279" description="Circadian input-output histidine kinase CikA">
    <location>
        <begin position="1"/>
        <end position="729"/>
    </location>
</feature>
<feature type="domain" description="Histidine kinase" evidence="2">
    <location>
        <begin position="366"/>
        <end position="587"/>
    </location>
</feature>
<feature type="region of interest" description="N-terminal domain" evidence="1">
    <location>
        <begin position="1"/>
        <end position="169"/>
    </location>
</feature>
<feature type="region of interest" description="GAF domain" evidence="1">
    <location>
        <begin position="170"/>
        <end position="314"/>
    </location>
</feature>
<feature type="region of interest" description="PsR domain, binds KaiB" evidence="3">
    <location>
        <begin position="613"/>
        <end position="729"/>
    </location>
</feature>
<feature type="modified residue" description="Phosphohistidine; by autocatalysis" evidence="2">
    <location>
        <position position="369"/>
    </location>
</feature>
<feature type="mutagenesis site" description="Loss of KaiB binding." evidence="3">
    <original>T</original>
    <variation>R</variation>
    <location>
        <position position="627"/>
    </location>
</feature>
<feature type="mutagenesis site" description="Loss of KaiB binding." evidence="3">
    <original>C</original>
    <variation>R</variation>
    <location>
        <position position="630"/>
    </location>
</feature>
<feature type="mutagenesis site" description="Loss of KaiB binding." evidence="3">
    <original>R</original>
    <variation>D</variation>
    <location>
        <position position="650"/>
    </location>
</feature>
<feature type="strand" evidence="9">
    <location>
        <begin position="614"/>
        <end position="619"/>
    </location>
</feature>
<feature type="helix" evidence="9">
    <location>
        <begin position="623"/>
        <end position="635"/>
    </location>
</feature>
<feature type="strand" evidence="9">
    <location>
        <begin position="638"/>
        <end position="645"/>
    </location>
</feature>
<feature type="helix" evidence="9">
    <location>
        <begin position="648"/>
        <end position="653"/>
    </location>
</feature>
<feature type="strand" evidence="9">
    <location>
        <begin position="657"/>
        <end position="664"/>
    </location>
</feature>
<feature type="strand" evidence="10">
    <location>
        <begin position="666"/>
        <end position="668"/>
    </location>
</feature>
<feature type="helix" evidence="9">
    <location>
        <begin position="670"/>
        <end position="680"/>
    </location>
</feature>
<feature type="turn" evidence="9">
    <location>
        <begin position="683"/>
        <end position="685"/>
    </location>
</feature>
<feature type="strand" evidence="9">
    <location>
        <begin position="686"/>
        <end position="694"/>
    </location>
</feature>
<feature type="strand" evidence="9">
    <location>
        <begin position="701"/>
        <end position="707"/>
    </location>
</feature>
<feature type="helix" evidence="9">
    <location>
        <begin position="710"/>
        <end position="721"/>
    </location>
</feature>
<feature type="helix" evidence="9">
    <location>
        <begin position="722"/>
        <end position="724"/>
    </location>
</feature>
<proteinExistence type="evidence at protein level"/>
<sequence length="729" mass="82026">MPQPIFDRILPAFLYERIATVLLAQASRRGATVLTREEVIASTDAPFLIVVAESFALLLQAEPVPQMSTYRVAILTNPRAIARFLRKIRSQVPVNRRPLIRAVLQQLSPLNAKEQMLPADLAIALMAVLGEETTAQCQSCQPLVTAALNERQAQERLLHQVTTQIRQSLELPELLKIAVDRIREFLDVDRLLVGQFAQTEGELRGQITYESCRNSEIPSVLGIWDDCWQWSGLPSSSYQRLSQGEAIVVSDIQQFYGAVPCLQSFAAHWQIKSWLIVPIIVQDRLWGVLIAHQCDRPRQWQPQEVEFLTHLSQHLSIAIYQAQLYSELQQQKATLEQRVNERTQALREALSAMEAAHRIKNDFLATMSHELRTPLTCVIGVSATLLRWPLGPLTAKQREYLEIIHESGTHLLELINSILDLSEAELGRSQLHRSAFSIRQLCADCLEVVKPQAHRHQVNLRHQLMIPPTRDRFWGDYRRIQQILINLLSNAIKFTPAMGEVILRAWWKEDELIFQVQDTGIGIPAHLQSLLFQKFQQLDSSFGRAYTGAGLGLALTKQWVDLHHGWIDVDSTEGKGSTFTVGLPAISDPLPDPPKPKLDVPPLATTEVLVEPEGRIVLVSEDEATSTLICSILTTAGYQVIWLVDGEVERLLALTPIAVLLAEPFSYGDVQELVDQLRQRCTPEQLKIFILGSKGNYQGVDRYIPLPIHPESFLQQVTMGLTSLATSAQ</sequence>
<protein>
    <recommendedName>
        <fullName evidence="4">Circadian input-output histidine kinase CikA</fullName>
        <ecNumber evidence="1">2.7.13.3</ecNumber>
    </recommendedName>
</protein>
<evidence type="ECO:0000250" key="1">
    <source>
        <dbReference type="UniProtKB" id="Q9KHI5"/>
    </source>
</evidence>
<evidence type="ECO:0000255" key="2">
    <source>
        <dbReference type="PROSITE-ProRule" id="PRU00107"/>
    </source>
</evidence>
<evidence type="ECO:0000269" key="3">
    <source>
    </source>
</evidence>
<evidence type="ECO:0000303" key="4">
    <source>
    </source>
</evidence>
<evidence type="ECO:0000305" key="5"/>
<evidence type="ECO:0000312" key="6">
    <source>
        <dbReference type="EMBL" id="BAC08451.1"/>
    </source>
</evidence>
<evidence type="ECO:0007744" key="7">
    <source>
        <dbReference type="PDB" id="5JYU"/>
    </source>
</evidence>
<evidence type="ECO:0007744" key="8">
    <source>
        <dbReference type="PDB" id="5JYV"/>
    </source>
</evidence>
<evidence type="ECO:0007829" key="9">
    <source>
        <dbReference type="PDB" id="5JYU"/>
    </source>
</evidence>
<evidence type="ECO:0007829" key="10">
    <source>
        <dbReference type="PDB" id="5JYV"/>
    </source>
</evidence>
<reference evidence="6" key="1">
    <citation type="journal article" date="2002" name="DNA Res.">
        <title>Complete genome structure of the thermophilic cyanobacterium Thermosynechococcus elongatus BP-1.</title>
        <authorList>
            <person name="Nakamura Y."/>
            <person name="Kaneko T."/>
            <person name="Sato S."/>
            <person name="Ikeuchi M."/>
            <person name="Katoh H."/>
            <person name="Sasamoto S."/>
            <person name="Watanabe A."/>
            <person name="Iriguchi M."/>
            <person name="Kawashima K."/>
            <person name="Kimura T."/>
            <person name="Kishida Y."/>
            <person name="Kiyokawa C."/>
            <person name="Kohara M."/>
            <person name="Matsumoto M."/>
            <person name="Matsuno A."/>
            <person name="Nakazaki N."/>
            <person name="Shimpo S."/>
            <person name="Sugimoto M."/>
            <person name="Takeuchi C."/>
            <person name="Yamada M."/>
            <person name="Tabata S."/>
        </authorList>
    </citation>
    <scope>NUCLEOTIDE SEQUENCE [LARGE SCALE GENOMIC DNA]</scope>
    <source>
        <strain>NIES-2133 / IAM M-273 / BP-1</strain>
    </source>
</reference>
<reference evidence="7 8" key="2">
    <citation type="journal article" date="2017" name="Science">
        <title>Structural basis of the day-night transition in a bacterial circadian clock.</title>
        <authorList>
            <person name="Tseng R."/>
            <person name="Goularte N.F."/>
            <person name="Chavan A."/>
            <person name="Luu J."/>
            <person name="Cohen S.E."/>
            <person name="Chang Y.G."/>
            <person name="Heisler J."/>
            <person name="Li S."/>
            <person name="Michael A.K."/>
            <person name="Tripathi S."/>
            <person name="Golden S.S."/>
            <person name="LiWang A."/>
            <person name="Partch C.L."/>
        </authorList>
    </citation>
    <scope>STRUCTURE BY NMR OF 613-729 ALONE AND IN COMPLEX WITH KAIB</scope>
    <scope>FUNCTION IN OUTPUT PATHWAY</scope>
    <scope>SUBUNIT</scope>
    <scope>DOMAIN</scope>
    <scope>MUTAGENESIS OF THR-627; CYS-630 AND ARG-650</scope>
    <source>
        <strain>NIES-2133 / IAM M-273 / BP-1</strain>
    </source>
</reference>